<sequence>MAEALLPLPRRLVVTASTPACSSASSSTSPSPHCLLSRANPRPPRLAAPSPPRHRRLKAHAAVSDKSEQPKWWEKNAGPNMIDIHSTQEFLDALRDAGDRLVIVEFYGTWCGSCRALFPRLCRTAVENPDILFLKVNFDENKPMCKRLNVKVLPYFHFYRGADGQLEAFSCSLAKFQKLKDAIAVHNTARCSIGPPVGVGDVLDSPEEKPAEASPR</sequence>
<protein>
    <recommendedName>
        <fullName>Thioredoxin-like 2, chloroplastic</fullName>
    </recommendedName>
    <alternativeName>
        <fullName>Lilium-type thioredoxin 2</fullName>
    </alternativeName>
    <alternativeName>
        <fullName>OsTrx19</fullName>
    </alternativeName>
</protein>
<name>TRL2_ORYSJ</name>
<organism>
    <name type="scientific">Oryza sativa subsp. japonica</name>
    <name type="common">Rice</name>
    <dbReference type="NCBI Taxonomy" id="39947"/>
    <lineage>
        <taxon>Eukaryota</taxon>
        <taxon>Viridiplantae</taxon>
        <taxon>Streptophyta</taxon>
        <taxon>Embryophyta</taxon>
        <taxon>Tracheophyta</taxon>
        <taxon>Spermatophyta</taxon>
        <taxon>Magnoliopsida</taxon>
        <taxon>Liliopsida</taxon>
        <taxon>Poales</taxon>
        <taxon>Poaceae</taxon>
        <taxon>BOP clade</taxon>
        <taxon>Oryzoideae</taxon>
        <taxon>Oryzeae</taxon>
        <taxon>Oryzinae</taxon>
        <taxon>Oryza</taxon>
        <taxon>Oryza sativa</taxon>
    </lineage>
</organism>
<gene>
    <name type="ordered locus">Os05g0200100</name>
    <name type="ordered locus">LOC_Os05g11090</name>
    <name type="ORF">OSJNBa0017O06.11</name>
</gene>
<keyword id="KW-0150">Chloroplast</keyword>
<keyword id="KW-1015">Disulfide bond</keyword>
<keyword id="KW-0249">Electron transport</keyword>
<keyword id="KW-0934">Plastid</keyword>
<keyword id="KW-0676">Redox-active center</keyword>
<keyword id="KW-1185">Reference proteome</keyword>
<keyword id="KW-0809">Transit peptide</keyword>
<keyword id="KW-0813">Transport</keyword>
<reference key="1">
    <citation type="journal article" date="2005" name="Mol. Genet. Genomics">
        <title>A fine physical map of the rice chromosome 5.</title>
        <authorList>
            <person name="Cheng C.-H."/>
            <person name="Chung M.C."/>
            <person name="Liu S.-M."/>
            <person name="Chen S.-K."/>
            <person name="Kao F.Y."/>
            <person name="Lin S.-J."/>
            <person name="Hsiao S.-H."/>
            <person name="Tseng I.C."/>
            <person name="Hsing Y.-I.C."/>
            <person name="Wu H.-P."/>
            <person name="Chen C.-S."/>
            <person name="Shaw J.-F."/>
            <person name="Wu J."/>
            <person name="Matsumoto T."/>
            <person name="Sasaki T."/>
            <person name="Chen H.-C."/>
            <person name="Chow T.-Y."/>
        </authorList>
    </citation>
    <scope>NUCLEOTIDE SEQUENCE [LARGE SCALE GENOMIC DNA]</scope>
    <source>
        <strain>cv. Nipponbare</strain>
    </source>
</reference>
<reference key="2">
    <citation type="journal article" date="2005" name="Nature">
        <title>The map-based sequence of the rice genome.</title>
        <authorList>
            <consortium name="International rice genome sequencing project (IRGSP)"/>
        </authorList>
    </citation>
    <scope>NUCLEOTIDE SEQUENCE [LARGE SCALE GENOMIC DNA]</scope>
    <source>
        <strain>cv. Nipponbare</strain>
    </source>
</reference>
<reference key="3">
    <citation type="journal article" date="2008" name="Nucleic Acids Res.">
        <title>The rice annotation project database (RAP-DB): 2008 update.</title>
        <authorList>
            <consortium name="The rice annotation project (RAP)"/>
        </authorList>
    </citation>
    <scope>GENOME REANNOTATION</scope>
    <source>
        <strain>cv. Nipponbare</strain>
    </source>
</reference>
<reference key="4">
    <citation type="journal article" date="2013" name="Rice">
        <title>Improvement of the Oryza sativa Nipponbare reference genome using next generation sequence and optical map data.</title>
        <authorList>
            <person name="Kawahara Y."/>
            <person name="de la Bastide M."/>
            <person name="Hamilton J.P."/>
            <person name="Kanamori H."/>
            <person name="McCombie W.R."/>
            <person name="Ouyang S."/>
            <person name="Schwartz D.C."/>
            <person name="Tanaka T."/>
            <person name="Wu J."/>
            <person name="Zhou S."/>
            <person name="Childs K.L."/>
            <person name="Davidson R.M."/>
            <person name="Lin H."/>
            <person name="Quesada-Ocampo L."/>
            <person name="Vaillancourt B."/>
            <person name="Sakai H."/>
            <person name="Lee S.S."/>
            <person name="Kim J."/>
            <person name="Numa H."/>
            <person name="Itoh T."/>
            <person name="Buell C.R."/>
            <person name="Matsumoto T."/>
        </authorList>
    </citation>
    <scope>GENOME REANNOTATION</scope>
    <source>
        <strain>cv. Nipponbare</strain>
    </source>
</reference>
<reference key="5">
    <citation type="journal article" date="2003" name="Science">
        <title>Collection, mapping, and annotation of over 28,000 cDNA clones from japonica rice.</title>
        <authorList>
            <consortium name="The rice full-length cDNA consortium"/>
        </authorList>
    </citation>
    <scope>NUCLEOTIDE SEQUENCE [LARGE SCALE MRNA]</scope>
    <source>
        <strain>cv. Nipponbare</strain>
    </source>
</reference>
<reference key="6">
    <citation type="journal article" date="2009" name="Mol. Plant">
        <title>Comparative genomic study of the thioredoxin family in photosynthetic organisms with emphasis on Populus trichocarpa.</title>
        <authorList>
            <person name="Chibani K."/>
            <person name="Wingsle G."/>
            <person name="Jacquot J.P."/>
            <person name="Gelhaye E."/>
            <person name="Rouhier N."/>
        </authorList>
    </citation>
    <scope>GENE FAMILY</scope>
    <scope>NOMENCLATURE</scope>
</reference>
<evidence type="ECO:0000255" key="1"/>
<evidence type="ECO:0000255" key="2">
    <source>
        <dbReference type="PROSITE-ProRule" id="PRU00691"/>
    </source>
</evidence>
<evidence type="ECO:0000256" key="3">
    <source>
        <dbReference type="SAM" id="MobiDB-lite"/>
    </source>
</evidence>
<evidence type="ECO:0000305" key="4"/>
<dbReference type="EMBL" id="AC136520">
    <property type="protein sequence ID" value="AAV59369.1"/>
    <property type="molecule type" value="Genomic_DNA"/>
</dbReference>
<dbReference type="EMBL" id="AP008211">
    <property type="protein sequence ID" value="BAF16794.2"/>
    <property type="status" value="ALT_INIT"/>
    <property type="molecule type" value="Genomic_DNA"/>
</dbReference>
<dbReference type="EMBL" id="AP014961">
    <property type="protein sequence ID" value="BAS92705.1"/>
    <property type="molecule type" value="Genomic_DNA"/>
</dbReference>
<dbReference type="EMBL" id="AK061208">
    <property type="protein sequence ID" value="BAG87795.1"/>
    <property type="molecule type" value="mRNA"/>
</dbReference>
<dbReference type="EMBL" id="AK099199">
    <property type="protein sequence ID" value="BAG93992.1"/>
    <property type="molecule type" value="mRNA"/>
</dbReference>
<dbReference type="RefSeq" id="XP_015637663.1">
    <property type="nucleotide sequence ID" value="XM_015782177.1"/>
</dbReference>
<dbReference type="SMR" id="Q5TKD8"/>
<dbReference type="FunCoup" id="Q5TKD8">
    <property type="interactions" value="85"/>
</dbReference>
<dbReference type="STRING" id="39947.Q5TKD8"/>
<dbReference type="PaxDb" id="39947-Q5TKD8"/>
<dbReference type="EnsemblPlants" id="Os05t0200100-01">
    <property type="protein sequence ID" value="Os05t0200100-01"/>
    <property type="gene ID" value="Os05g0200100"/>
</dbReference>
<dbReference type="EnsemblPlants" id="Os05t0200100-02">
    <property type="protein sequence ID" value="Os05t0200100-02"/>
    <property type="gene ID" value="Os05g0200100"/>
</dbReference>
<dbReference type="Gramene" id="Os05t0200100-01">
    <property type="protein sequence ID" value="Os05t0200100-01"/>
    <property type="gene ID" value="Os05g0200100"/>
</dbReference>
<dbReference type="Gramene" id="Os05t0200100-02">
    <property type="protein sequence ID" value="Os05t0200100-02"/>
    <property type="gene ID" value="Os05g0200100"/>
</dbReference>
<dbReference type="KEGG" id="dosa:Os05g0200100"/>
<dbReference type="eggNOG" id="KOG0907">
    <property type="taxonomic scope" value="Eukaryota"/>
</dbReference>
<dbReference type="HOGENOM" id="CLU_055041_1_0_1"/>
<dbReference type="InParanoid" id="Q5TKD8"/>
<dbReference type="OMA" id="KWWERSV"/>
<dbReference type="OrthoDB" id="2121326at2759"/>
<dbReference type="Proteomes" id="UP000000763">
    <property type="component" value="Chromosome 5"/>
</dbReference>
<dbReference type="Proteomes" id="UP000059680">
    <property type="component" value="Chromosome 5"/>
</dbReference>
<dbReference type="GO" id="GO:0009507">
    <property type="term" value="C:chloroplast"/>
    <property type="evidence" value="ECO:0000318"/>
    <property type="project" value="GO_Central"/>
</dbReference>
<dbReference type="GO" id="GO:0045454">
    <property type="term" value="P:cell redox homeostasis"/>
    <property type="evidence" value="ECO:0000318"/>
    <property type="project" value="GO_Central"/>
</dbReference>
<dbReference type="CDD" id="cd02947">
    <property type="entry name" value="TRX_family"/>
    <property type="match status" value="1"/>
</dbReference>
<dbReference type="FunFam" id="3.40.30.10:FF:000199">
    <property type="entry name" value="Thioredoxin-like 1-2, chloroplastic"/>
    <property type="match status" value="1"/>
</dbReference>
<dbReference type="Gene3D" id="3.40.30.10">
    <property type="entry name" value="Glutaredoxin"/>
    <property type="match status" value="1"/>
</dbReference>
<dbReference type="InterPro" id="IPR036249">
    <property type="entry name" value="Thioredoxin-like_sf"/>
</dbReference>
<dbReference type="InterPro" id="IPR017937">
    <property type="entry name" value="Thioredoxin_CS"/>
</dbReference>
<dbReference type="InterPro" id="IPR013766">
    <property type="entry name" value="Thioredoxin_domain"/>
</dbReference>
<dbReference type="PANTHER" id="PTHR43601">
    <property type="entry name" value="THIOREDOXIN, MITOCHONDRIAL"/>
    <property type="match status" value="1"/>
</dbReference>
<dbReference type="PANTHER" id="PTHR43601:SF32">
    <property type="entry name" value="THIOREDOXIN-LIKE 2-2, CHLOROPLASTIC"/>
    <property type="match status" value="1"/>
</dbReference>
<dbReference type="Pfam" id="PF00085">
    <property type="entry name" value="Thioredoxin"/>
    <property type="match status" value="1"/>
</dbReference>
<dbReference type="SUPFAM" id="SSF52833">
    <property type="entry name" value="Thioredoxin-like"/>
    <property type="match status" value="1"/>
</dbReference>
<dbReference type="PROSITE" id="PS00194">
    <property type="entry name" value="THIOREDOXIN_1"/>
    <property type="match status" value="1"/>
</dbReference>
<dbReference type="PROSITE" id="PS51352">
    <property type="entry name" value="THIOREDOXIN_2"/>
    <property type="match status" value="1"/>
</dbReference>
<comment type="function">
    <text>Probable thiol-disulfide oxidoreductase that may participate in various redox reactions.</text>
</comment>
<comment type="subcellular location">
    <subcellularLocation>
        <location evidence="4">Plastid</location>
        <location evidence="4">Chloroplast</location>
    </subcellularLocation>
</comment>
<comment type="similarity">
    <text evidence="4">Belongs to the thioredoxin family.</text>
</comment>
<comment type="caution">
    <text evidence="4">The active site contains a CGSC motif which differs from the conserved CGPC motif.</text>
</comment>
<comment type="sequence caution" evidence="4">
    <conflict type="erroneous initiation">
        <sequence resource="EMBL-CDS" id="BAF16794"/>
    </conflict>
    <text>Extended N-terminus.</text>
</comment>
<accession>Q5TKD8</accession>
<accession>A0A0N7KKA9</accession>
<accession>Q0DK29</accession>
<proteinExistence type="evidence at transcript level"/>
<feature type="transit peptide" description="Chloroplast" evidence="1">
    <location>
        <begin position="1"/>
        <end position="58"/>
    </location>
</feature>
<feature type="chain" id="PRO_0000394839" description="Thioredoxin-like 2, chloroplastic">
    <location>
        <begin position="59"/>
        <end position="216"/>
    </location>
</feature>
<feature type="domain" description="Thioredoxin" evidence="2">
    <location>
        <begin position="61"/>
        <end position="188"/>
    </location>
</feature>
<feature type="region of interest" description="Disordered" evidence="3">
    <location>
        <begin position="19"/>
        <end position="70"/>
    </location>
</feature>
<feature type="compositionally biased region" description="Low complexity" evidence="3">
    <location>
        <begin position="19"/>
        <end position="40"/>
    </location>
</feature>
<feature type="compositionally biased region" description="Pro residues" evidence="3">
    <location>
        <begin position="41"/>
        <end position="51"/>
    </location>
</feature>
<feature type="active site" description="Nucleophile" evidence="1">
    <location>
        <position position="111"/>
    </location>
</feature>
<feature type="active site" description="Nucleophile" evidence="1">
    <location>
        <position position="114"/>
    </location>
</feature>
<feature type="disulfide bond" description="Redox-active" evidence="2">
    <location>
        <begin position="111"/>
        <end position="114"/>
    </location>
</feature>